<feature type="chain" id="PRO_0000198539" description="Ribonuclease P protein component">
    <location>
        <begin position="1"/>
        <end position="119"/>
    </location>
</feature>
<comment type="function">
    <text evidence="1">RNaseP catalyzes the removal of the 5'-leader sequence from pre-tRNA to produce the mature 5'-terminus. It can also cleave other RNA substrates such as 4.5S RNA. The protein component plays an auxiliary but essential role in vivo by binding to the 5'-leader sequence and broadening the substrate specificity of the ribozyme.</text>
</comment>
<comment type="catalytic activity">
    <reaction evidence="1">
        <text>Endonucleolytic cleavage of RNA, removing 5'-extranucleotides from tRNA precursor.</text>
        <dbReference type="EC" id="3.1.26.5"/>
    </reaction>
</comment>
<comment type="subunit">
    <text evidence="1">Consists of a catalytic RNA component (M1 or rnpB) and a protein subunit.</text>
</comment>
<comment type="similarity">
    <text evidence="1">Belongs to the RnpA family.</text>
</comment>
<accession>Q8DVX4</accession>
<gene>
    <name evidence="1" type="primary">rnpA</name>
    <name type="ordered locus">SMU_336</name>
</gene>
<proteinExistence type="inferred from homology"/>
<reference key="1">
    <citation type="journal article" date="2002" name="Proc. Natl. Acad. Sci. U.S.A.">
        <title>Genome sequence of Streptococcus mutans UA159, a cariogenic dental pathogen.</title>
        <authorList>
            <person name="Ajdic D.J."/>
            <person name="McShan W.M."/>
            <person name="McLaughlin R.E."/>
            <person name="Savic G."/>
            <person name="Chang J."/>
            <person name="Carson M.B."/>
            <person name="Primeaux C."/>
            <person name="Tian R."/>
            <person name="Kenton S."/>
            <person name="Jia H.G."/>
            <person name="Lin S.P."/>
            <person name="Qian Y."/>
            <person name="Li S."/>
            <person name="Zhu H."/>
            <person name="Najar F.Z."/>
            <person name="Lai H."/>
            <person name="White J."/>
            <person name="Roe B.A."/>
            <person name="Ferretti J.J."/>
        </authorList>
    </citation>
    <scope>NUCLEOTIDE SEQUENCE [LARGE SCALE GENOMIC DNA]</scope>
    <source>
        <strain>ATCC 700610 / UA159</strain>
    </source>
</reference>
<organism>
    <name type="scientific">Streptococcus mutans serotype c (strain ATCC 700610 / UA159)</name>
    <dbReference type="NCBI Taxonomy" id="210007"/>
    <lineage>
        <taxon>Bacteria</taxon>
        <taxon>Bacillati</taxon>
        <taxon>Bacillota</taxon>
        <taxon>Bacilli</taxon>
        <taxon>Lactobacillales</taxon>
        <taxon>Streptococcaceae</taxon>
        <taxon>Streptococcus</taxon>
    </lineage>
</organism>
<evidence type="ECO:0000255" key="1">
    <source>
        <dbReference type="HAMAP-Rule" id="MF_00227"/>
    </source>
</evidence>
<protein>
    <recommendedName>
        <fullName evidence="1">Ribonuclease P protein component</fullName>
        <shortName evidence="1">RNase P protein</shortName>
        <shortName evidence="1">RNaseP protein</shortName>
        <ecNumber evidence="1">3.1.26.5</ecNumber>
    </recommendedName>
    <alternativeName>
        <fullName evidence="1">Protein C5</fullName>
    </alternativeName>
</protein>
<name>RNPA_STRMU</name>
<keyword id="KW-0255">Endonuclease</keyword>
<keyword id="KW-0378">Hydrolase</keyword>
<keyword id="KW-0540">Nuclease</keyword>
<keyword id="KW-1185">Reference proteome</keyword>
<keyword id="KW-0694">RNA-binding</keyword>
<keyword id="KW-0819">tRNA processing</keyword>
<dbReference type="EC" id="3.1.26.5" evidence="1"/>
<dbReference type="EMBL" id="AE014133">
    <property type="protein sequence ID" value="AAN58095.1"/>
    <property type="molecule type" value="Genomic_DNA"/>
</dbReference>
<dbReference type="RefSeq" id="NP_720789.1">
    <property type="nucleotide sequence ID" value="NC_004350.2"/>
</dbReference>
<dbReference type="RefSeq" id="WP_002262511.1">
    <property type="nucleotide sequence ID" value="NC_004350.2"/>
</dbReference>
<dbReference type="SMR" id="Q8DVX4"/>
<dbReference type="STRING" id="210007.SMU_336"/>
<dbReference type="KEGG" id="smu:SMU_336"/>
<dbReference type="PATRIC" id="fig|210007.7.peg.291"/>
<dbReference type="eggNOG" id="COG0594">
    <property type="taxonomic scope" value="Bacteria"/>
</dbReference>
<dbReference type="HOGENOM" id="CLU_117179_9_1_9"/>
<dbReference type="OrthoDB" id="9810867at2"/>
<dbReference type="PhylomeDB" id="Q8DVX4"/>
<dbReference type="Proteomes" id="UP000002512">
    <property type="component" value="Chromosome"/>
</dbReference>
<dbReference type="GO" id="GO:0030677">
    <property type="term" value="C:ribonuclease P complex"/>
    <property type="evidence" value="ECO:0007669"/>
    <property type="project" value="TreeGrafter"/>
</dbReference>
<dbReference type="GO" id="GO:0042781">
    <property type="term" value="F:3'-tRNA processing endoribonuclease activity"/>
    <property type="evidence" value="ECO:0007669"/>
    <property type="project" value="TreeGrafter"/>
</dbReference>
<dbReference type="GO" id="GO:0004526">
    <property type="term" value="F:ribonuclease P activity"/>
    <property type="evidence" value="ECO:0007669"/>
    <property type="project" value="UniProtKB-UniRule"/>
</dbReference>
<dbReference type="GO" id="GO:0000049">
    <property type="term" value="F:tRNA binding"/>
    <property type="evidence" value="ECO:0007669"/>
    <property type="project" value="UniProtKB-UniRule"/>
</dbReference>
<dbReference type="GO" id="GO:0001682">
    <property type="term" value="P:tRNA 5'-leader removal"/>
    <property type="evidence" value="ECO:0007669"/>
    <property type="project" value="UniProtKB-UniRule"/>
</dbReference>
<dbReference type="FunFam" id="3.30.230.10:FF:000021">
    <property type="entry name" value="Ribonuclease P protein component"/>
    <property type="match status" value="1"/>
</dbReference>
<dbReference type="Gene3D" id="3.30.230.10">
    <property type="match status" value="1"/>
</dbReference>
<dbReference type="HAMAP" id="MF_00227">
    <property type="entry name" value="RNase_P"/>
    <property type="match status" value="1"/>
</dbReference>
<dbReference type="InterPro" id="IPR020568">
    <property type="entry name" value="Ribosomal_Su5_D2-typ_SF"/>
</dbReference>
<dbReference type="InterPro" id="IPR014721">
    <property type="entry name" value="Ribsml_uS5_D2-typ_fold_subgr"/>
</dbReference>
<dbReference type="InterPro" id="IPR000100">
    <property type="entry name" value="RNase_P"/>
</dbReference>
<dbReference type="InterPro" id="IPR020539">
    <property type="entry name" value="RNase_P_CS"/>
</dbReference>
<dbReference type="NCBIfam" id="TIGR00188">
    <property type="entry name" value="rnpA"/>
    <property type="match status" value="1"/>
</dbReference>
<dbReference type="PANTHER" id="PTHR33992">
    <property type="entry name" value="RIBONUCLEASE P PROTEIN COMPONENT"/>
    <property type="match status" value="1"/>
</dbReference>
<dbReference type="PANTHER" id="PTHR33992:SF1">
    <property type="entry name" value="RIBONUCLEASE P PROTEIN COMPONENT"/>
    <property type="match status" value="1"/>
</dbReference>
<dbReference type="Pfam" id="PF00825">
    <property type="entry name" value="Ribonuclease_P"/>
    <property type="match status" value="1"/>
</dbReference>
<dbReference type="SUPFAM" id="SSF54211">
    <property type="entry name" value="Ribosomal protein S5 domain 2-like"/>
    <property type="match status" value="1"/>
</dbReference>
<dbReference type="PROSITE" id="PS00648">
    <property type="entry name" value="RIBONUCLEASE_P"/>
    <property type="match status" value="1"/>
</dbReference>
<sequence length="119" mass="13728">MKKAYRVKSDKDFQAIFTEGRSVANRKFVVYSLEKDQSHYRVGLSVGKRLGNAVVRNAIKRKLRHVLMELGPYLGTQDFVVIARKGVEELDYSTMKKNLVHVLKLAKLYQEGSIREKEI</sequence>